<accession>B2SMV3</accession>
<organism>
    <name type="scientific">Xanthomonas oryzae pv. oryzae (strain PXO99A)</name>
    <dbReference type="NCBI Taxonomy" id="360094"/>
    <lineage>
        <taxon>Bacteria</taxon>
        <taxon>Pseudomonadati</taxon>
        <taxon>Pseudomonadota</taxon>
        <taxon>Gammaproteobacteria</taxon>
        <taxon>Lysobacterales</taxon>
        <taxon>Lysobacteraceae</taxon>
        <taxon>Xanthomonas</taxon>
    </lineage>
</organism>
<reference key="1">
    <citation type="journal article" date="2008" name="BMC Genomics">
        <title>Genome sequence and rapid evolution of the rice pathogen Xanthomonas oryzae pv. oryzae PXO99A.</title>
        <authorList>
            <person name="Salzberg S.L."/>
            <person name="Sommer D.D."/>
            <person name="Schatz M.C."/>
            <person name="Phillippy A.M."/>
            <person name="Rabinowicz P.D."/>
            <person name="Tsuge S."/>
            <person name="Furutani A."/>
            <person name="Ochiai H."/>
            <person name="Delcher A.L."/>
            <person name="Kelley D."/>
            <person name="Madupu R."/>
            <person name="Puiu D."/>
            <person name="Radune D."/>
            <person name="Shumway M."/>
            <person name="Trapnell C."/>
            <person name="Aparna G."/>
            <person name="Jha G."/>
            <person name="Pandey A."/>
            <person name="Patil P.B."/>
            <person name="Ishihara H."/>
            <person name="Meyer D.F."/>
            <person name="Szurek B."/>
            <person name="Verdier V."/>
            <person name="Koebnik R."/>
            <person name="Dow J.M."/>
            <person name="Ryan R.P."/>
            <person name="Hirata H."/>
            <person name="Tsuyumu S."/>
            <person name="Won Lee S."/>
            <person name="Seo Y.-S."/>
            <person name="Sriariyanum M."/>
            <person name="Ronald P.C."/>
            <person name="Sonti R.V."/>
            <person name="Van Sluys M.-A."/>
            <person name="Leach J.E."/>
            <person name="White F.F."/>
            <person name="Bogdanove A.J."/>
        </authorList>
    </citation>
    <scope>NUCLEOTIDE SEQUENCE [LARGE SCALE GENOMIC DNA]</scope>
    <source>
        <strain>PXO99A</strain>
    </source>
</reference>
<comment type="function">
    <text evidence="1">Tetrapolymerization of the monopyrrole PBG into the hydroxymethylbilane pre-uroporphyrinogen in several discrete steps.</text>
</comment>
<comment type="catalytic activity">
    <reaction evidence="1">
        <text>4 porphobilinogen + H2O = hydroxymethylbilane + 4 NH4(+)</text>
        <dbReference type="Rhea" id="RHEA:13185"/>
        <dbReference type="ChEBI" id="CHEBI:15377"/>
        <dbReference type="ChEBI" id="CHEBI:28938"/>
        <dbReference type="ChEBI" id="CHEBI:57845"/>
        <dbReference type="ChEBI" id="CHEBI:58126"/>
        <dbReference type="EC" id="2.5.1.61"/>
    </reaction>
</comment>
<comment type="cofactor">
    <cofactor evidence="1">
        <name>dipyrromethane</name>
        <dbReference type="ChEBI" id="CHEBI:60342"/>
    </cofactor>
    <text evidence="1">Binds 1 dipyrromethane group covalently.</text>
</comment>
<comment type="pathway">
    <text evidence="1">Porphyrin-containing compound metabolism; protoporphyrin-IX biosynthesis; coproporphyrinogen-III from 5-aminolevulinate: step 2/4.</text>
</comment>
<comment type="subunit">
    <text evidence="1">Monomer.</text>
</comment>
<comment type="miscellaneous">
    <text evidence="1">The porphobilinogen subunits are added to the dipyrromethane group.</text>
</comment>
<comment type="similarity">
    <text evidence="1">Belongs to the HMBS family.</text>
</comment>
<name>HEM3_XANOP</name>
<evidence type="ECO:0000255" key="1">
    <source>
        <dbReference type="HAMAP-Rule" id="MF_00260"/>
    </source>
</evidence>
<dbReference type="EC" id="2.5.1.61" evidence="1"/>
<dbReference type="EMBL" id="CP000967">
    <property type="protein sequence ID" value="ACD57515.1"/>
    <property type="molecule type" value="Genomic_DNA"/>
</dbReference>
<dbReference type="RefSeq" id="WP_011409484.1">
    <property type="nucleotide sequence ID" value="NC_010717.2"/>
</dbReference>
<dbReference type="SMR" id="B2SMV3"/>
<dbReference type="KEGG" id="xop:PXO_04137"/>
<dbReference type="eggNOG" id="COG0181">
    <property type="taxonomic scope" value="Bacteria"/>
</dbReference>
<dbReference type="HOGENOM" id="CLU_019704_0_2_6"/>
<dbReference type="UniPathway" id="UPA00251">
    <property type="reaction ID" value="UER00319"/>
</dbReference>
<dbReference type="Proteomes" id="UP000001740">
    <property type="component" value="Chromosome"/>
</dbReference>
<dbReference type="GO" id="GO:0005737">
    <property type="term" value="C:cytoplasm"/>
    <property type="evidence" value="ECO:0007669"/>
    <property type="project" value="TreeGrafter"/>
</dbReference>
<dbReference type="GO" id="GO:0004418">
    <property type="term" value="F:hydroxymethylbilane synthase activity"/>
    <property type="evidence" value="ECO:0007669"/>
    <property type="project" value="UniProtKB-UniRule"/>
</dbReference>
<dbReference type="GO" id="GO:0006782">
    <property type="term" value="P:protoporphyrinogen IX biosynthetic process"/>
    <property type="evidence" value="ECO:0007669"/>
    <property type="project" value="UniProtKB-UniRule"/>
</dbReference>
<dbReference type="CDD" id="cd13646">
    <property type="entry name" value="PBP2_EcHMBS_like"/>
    <property type="match status" value="1"/>
</dbReference>
<dbReference type="FunFam" id="3.40.190.10:FF:000004">
    <property type="entry name" value="Porphobilinogen deaminase"/>
    <property type="match status" value="1"/>
</dbReference>
<dbReference type="FunFam" id="3.40.190.10:FF:000005">
    <property type="entry name" value="Porphobilinogen deaminase"/>
    <property type="match status" value="1"/>
</dbReference>
<dbReference type="Gene3D" id="3.40.190.10">
    <property type="entry name" value="Periplasmic binding protein-like II"/>
    <property type="match status" value="2"/>
</dbReference>
<dbReference type="Gene3D" id="3.30.160.40">
    <property type="entry name" value="Porphobilinogen deaminase, C-terminal domain"/>
    <property type="match status" value="1"/>
</dbReference>
<dbReference type="HAMAP" id="MF_00260">
    <property type="entry name" value="Porphobil_deam"/>
    <property type="match status" value="1"/>
</dbReference>
<dbReference type="InterPro" id="IPR000860">
    <property type="entry name" value="HemC"/>
</dbReference>
<dbReference type="InterPro" id="IPR022419">
    <property type="entry name" value="Porphobilin_deaminase_cofac_BS"/>
</dbReference>
<dbReference type="InterPro" id="IPR022417">
    <property type="entry name" value="Porphobilin_deaminase_N"/>
</dbReference>
<dbReference type="InterPro" id="IPR022418">
    <property type="entry name" value="Porphobilinogen_deaminase_C"/>
</dbReference>
<dbReference type="InterPro" id="IPR036803">
    <property type="entry name" value="Porphobilinogen_deaminase_C_sf"/>
</dbReference>
<dbReference type="NCBIfam" id="TIGR00212">
    <property type="entry name" value="hemC"/>
    <property type="match status" value="1"/>
</dbReference>
<dbReference type="PANTHER" id="PTHR11557">
    <property type="entry name" value="PORPHOBILINOGEN DEAMINASE"/>
    <property type="match status" value="1"/>
</dbReference>
<dbReference type="PANTHER" id="PTHR11557:SF0">
    <property type="entry name" value="PORPHOBILINOGEN DEAMINASE"/>
    <property type="match status" value="1"/>
</dbReference>
<dbReference type="Pfam" id="PF01379">
    <property type="entry name" value="Porphobil_deam"/>
    <property type="match status" value="1"/>
</dbReference>
<dbReference type="Pfam" id="PF03900">
    <property type="entry name" value="Porphobil_deamC"/>
    <property type="match status" value="1"/>
</dbReference>
<dbReference type="PIRSF" id="PIRSF001438">
    <property type="entry name" value="4pyrrol_synth_OHMeBilane_synth"/>
    <property type="match status" value="1"/>
</dbReference>
<dbReference type="PRINTS" id="PR00151">
    <property type="entry name" value="PORPHBDMNASE"/>
</dbReference>
<dbReference type="SUPFAM" id="SSF53850">
    <property type="entry name" value="Periplasmic binding protein-like II"/>
    <property type="match status" value="1"/>
</dbReference>
<dbReference type="SUPFAM" id="SSF54782">
    <property type="entry name" value="Porphobilinogen deaminase (hydroxymethylbilane synthase), C-terminal domain"/>
    <property type="match status" value="1"/>
</dbReference>
<dbReference type="PROSITE" id="PS00533">
    <property type="entry name" value="PORPHOBILINOGEN_DEAM"/>
    <property type="match status" value="1"/>
</dbReference>
<proteinExistence type="inferred from homology"/>
<keyword id="KW-0627">Porphyrin biosynthesis</keyword>
<keyword id="KW-0808">Transferase</keyword>
<gene>
    <name evidence="1" type="primary">hemC</name>
    <name type="ordered locus">PXO_04137</name>
</gene>
<protein>
    <recommendedName>
        <fullName evidence="1">Porphobilinogen deaminase</fullName>
        <shortName evidence="1">PBG</shortName>
        <ecNumber evidence="1">2.5.1.61</ecNumber>
    </recommendedName>
    <alternativeName>
        <fullName evidence="1">Hydroxymethylbilane synthase</fullName>
        <shortName evidence="1">HMBS</shortName>
    </alternativeName>
    <alternativeName>
        <fullName evidence="1">Pre-uroporphyrinogen synthase</fullName>
    </alternativeName>
</protein>
<feature type="chain" id="PRO_1000114185" description="Porphobilinogen deaminase">
    <location>
        <begin position="1"/>
        <end position="304"/>
    </location>
</feature>
<feature type="modified residue" description="S-(dipyrrolylmethanemethyl)cysteine" evidence="1">
    <location>
        <position position="240"/>
    </location>
</feature>
<sequence length="304" mass="32378">MTTLRIATRKSPLALWQSEHVAAALRQHHPGLEVVLVPMSTRGDEVLDRSLAAIGGKGLFLKELELAMLRGDADCAVHSFKDVPMELDDPFVLPAILERGDPADALVSNLYASLQALPLGARVGTSSLRRQAQLRAARPDLELIDLRGNVNTRLAKLDNGGYDAIVLACAGLQRLGLDERISARLDAPEWLPAPAQGAVAVECRGDDARIHSLLAVLDAGRTRACVEAERAMNRALHGSCHVPVAALARWEGEGLFLQGMVGSASDGRLIHADAHGSADDTEDLGRRVAQGLFDKGAAQLLAAL</sequence>